<feature type="chain" id="PRO_1000091310" description="Leucine--tRNA ligase">
    <location>
        <begin position="1"/>
        <end position="820"/>
    </location>
</feature>
<feature type="short sequence motif" description="'HIGH' region">
    <location>
        <begin position="42"/>
        <end position="52"/>
    </location>
</feature>
<feature type="short sequence motif" description="'KMSKS' region">
    <location>
        <begin position="576"/>
        <end position="580"/>
    </location>
</feature>
<feature type="binding site" evidence="1">
    <location>
        <position position="579"/>
    </location>
    <ligand>
        <name>ATP</name>
        <dbReference type="ChEBI" id="CHEBI:30616"/>
    </ligand>
</feature>
<sequence length="820" mass="94273">MNESYQPTLIEQLAQEYWEENETFEVKEDLSREKFYCLSMLPYPSGDLHMGHVRNYTIGDVIARYQIHKGRNVLQPMGWDAFGLPAENAAIQRELPPAEWTRKNIKKMRKQLKQLGFAYDWSREITTCDSTYYRWEQWLFLQLYKKGLAYKKNAIVNWDPVDQTVLANEQIVDGRGWRSGAVVERREISQWFLKITDYSEELLKDLDELKEWPEQVITMQRNWIGQSQGVIINFNLEKGPDKLQVYTTRPDTLMGVTYLAIAPEHPLAKERAKKSKKIAAFLKKCKQTRVAEADIATQEKEGIDSGLFAVHPLSKEKLPIWIANFVLMEYASGVVMAVPAHDERDHEFALKYDLPLKPVIEPADGHDWDYNQAAYTNPGKLINSGSFNDIDSKTAFNLIADYLKNNGAGSRQTHYRLRDWGISRQRYWGTPIPIIYCKTCGTVPVPENQLPVLLPEDIIPTGHGSPLKETASFYKTRCPVCNKPATRETDTMDTFVESSWYYARYSCPDQDKVMLDDRAKYWTPVDQYIGGIEHAVMHLLYARFMHKILRDLGLLNSNEPFIRLLTQGMVLKDGAKMSKSKGNVVTPQSLIKKYGADTVRLFIIFAAPPEQDLEWSDSGVEGAYRFLKKLWGFSYRIKDALLAINQQKERSNYQWEAPEHRQTRQQIHECLQQANIDMERLQFNTVVSAVMKILNILIKLTTDNDAEAHLIREGTGILLRLLSPITPHISHHLWQSLGFGGDILDTPWPRPDPKALQTTELELIVQINGKLRGRIQVPTEASKEIIESTALNQENVQRHLADKKIKKVIVVPKKLINIVV</sequence>
<keyword id="KW-0030">Aminoacyl-tRNA synthetase</keyword>
<keyword id="KW-0067">ATP-binding</keyword>
<keyword id="KW-0963">Cytoplasm</keyword>
<keyword id="KW-0436">Ligase</keyword>
<keyword id="KW-0547">Nucleotide-binding</keyword>
<keyword id="KW-0648">Protein biosynthesis</keyword>
<evidence type="ECO:0000255" key="1">
    <source>
        <dbReference type="HAMAP-Rule" id="MF_00049"/>
    </source>
</evidence>
<protein>
    <recommendedName>
        <fullName evidence="1">Leucine--tRNA ligase</fullName>
        <ecNumber evidence="1">6.1.1.4</ecNumber>
    </recommendedName>
    <alternativeName>
        <fullName evidence="1">Leucyl-tRNA synthetase</fullName>
        <shortName evidence="1">LeuRS</shortName>
    </alternativeName>
</protein>
<accession>B6J1B2</accession>
<reference key="1">
    <citation type="journal article" date="2009" name="Infect. Immun.">
        <title>Comparative genomics reveal extensive transposon-mediated genomic plasticity and diversity among potential effector proteins within the genus Coxiella.</title>
        <authorList>
            <person name="Beare P.A."/>
            <person name="Unsworth N."/>
            <person name="Andoh M."/>
            <person name="Voth D.E."/>
            <person name="Omsland A."/>
            <person name="Gilk S.D."/>
            <person name="Williams K.P."/>
            <person name="Sobral B.W."/>
            <person name="Kupko J.J. III"/>
            <person name="Porcella S.F."/>
            <person name="Samuel J.E."/>
            <person name="Heinzen R.A."/>
        </authorList>
    </citation>
    <scope>NUCLEOTIDE SEQUENCE [LARGE SCALE GENOMIC DNA]</scope>
    <source>
        <strain>CbuG_Q212</strain>
    </source>
</reference>
<gene>
    <name evidence="1" type="primary">leuS</name>
    <name type="ordered locus">CbuG_1438</name>
</gene>
<proteinExistence type="inferred from homology"/>
<name>SYL_COXB2</name>
<dbReference type="EC" id="6.1.1.4" evidence="1"/>
<dbReference type="EMBL" id="CP001019">
    <property type="protein sequence ID" value="ACJ18740.1"/>
    <property type="molecule type" value="Genomic_DNA"/>
</dbReference>
<dbReference type="RefSeq" id="WP_012570259.1">
    <property type="nucleotide sequence ID" value="NC_011527.1"/>
</dbReference>
<dbReference type="SMR" id="B6J1B2"/>
<dbReference type="KEGG" id="cbg:CbuG_1438"/>
<dbReference type="HOGENOM" id="CLU_004427_0_0_6"/>
<dbReference type="GO" id="GO:0005829">
    <property type="term" value="C:cytosol"/>
    <property type="evidence" value="ECO:0007669"/>
    <property type="project" value="TreeGrafter"/>
</dbReference>
<dbReference type="GO" id="GO:0002161">
    <property type="term" value="F:aminoacyl-tRNA deacylase activity"/>
    <property type="evidence" value="ECO:0007669"/>
    <property type="project" value="InterPro"/>
</dbReference>
<dbReference type="GO" id="GO:0005524">
    <property type="term" value="F:ATP binding"/>
    <property type="evidence" value="ECO:0007669"/>
    <property type="project" value="UniProtKB-UniRule"/>
</dbReference>
<dbReference type="GO" id="GO:0004823">
    <property type="term" value="F:leucine-tRNA ligase activity"/>
    <property type="evidence" value="ECO:0007669"/>
    <property type="project" value="UniProtKB-UniRule"/>
</dbReference>
<dbReference type="GO" id="GO:0006429">
    <property type="term" value="P:leucyl-tRNA aminoacylation"/>
    <property type="evidence" value="ECO:0007669"/>
    <property type="project" value="UniProtKB-UniRule"/>
</dbReference>
<dbReference type="CDD" id="cd07958">
    <property type="entry name" value="Anticodon_Ia_Leu_BEm"/>
    <property type="match status" value="1"/>
</dbReference>
<dbReference type="CDD" id="cd00812">
    <property type="entry name" value="LeuRS_core"/>
    <property type="match status" value="1"/>
</dbReference>
<dbReference type="FunFam" id="1.10.730.10:FF:000003">
    <property type="entry name" value="Leucine--tRNA ligase"/>
    <property type="match status" value="1"/>
</dbReference>
<dbReference type="FunFam" id="3.10.20.590:FF:000001">
    <property type="entry name" value="Leucine--tRNA ligase"/>
    <property type="match status" value="1"/>
</dbReference>
<dbReference type="FunFam" id="3.40.50.620:FF:000056">
    <property type="entry name" value="Leucine--tRNA ligase"/>
    <property type="match status" value="1"/>
</dbReference>
<dbReference type="FunFam" id="3.40.50.620:FF:000395">
    <property type="entry name" value="Leucine--tRNA ligase"/>
    <property type="match status" value="1"/>
</dbReference>
<dbReference type="FunFam" id="3.90.740.10:FF:000012">
    <property type="entry name" value="Leucine--tRNA ligase"/>
    <property type="match status" value="1"/>
</dbReference>
<dbReference type="Gene3D" id="3.10.20.590">
    <property type="match status" value="1"/>
</dbReference>
<dbReference type="Gene3D" id="3.40.50.620">
    <property type="entry name" value="HUPs"/>
    <property type="match status" value="2"/>
</dbReference>
<dbReference type="Gene3D" id="1.10.730.10">
    <property type="entry name" value="Isoleucyl-tRNA Synthetase, Domain 1"/>
    <property type="match status" value="1"/>
</dbReference>
<dbReference type="Gene3D" id="3.90.740.10">
    <property type="entry name" value="Valyl/Leucyl/Isoleucyl-tRNA synthetase, editing domain"/>
    <property type="match status" value="1"/>
</dbReference>
<dbReference type="HAMAP" id="MF_00049_B">
    <property type="entry name" value="Leu_tRNA_synth_B"/>
    <property type="match status" value="1"/>
</dbReference>
<dbReference type="InterPro" id="IPR001412">
    <property type="entry name" value="aa-tRNA-synth_I_CS"/>
</dbReference>
<dbReference type="InterPro" id="IPR002300">
    <property type="entry name" value="aa-tRNA-synth_Ia"/>
</dbReference>
<dbReference type="InterPro" id="IPR002302">
    <property type="entry name" value="Leu-tRNA-ligase"/>
</dbReference>
<dbReference type="InterPro" id="IPR025709">
    <property type="entry name" value="Leu_tRNA-synth_edit"/>
</dbReference>
<dbReference type="InterPro" id="IPR013155">
    <property type="entry name" value="M/V/L/I-tRNA-synth_anticd-bd"/>
</dbReference>
<dbReference type="InterPro" id="IPR015413">
    <property type="entry name" value="Methionyl/Leucyl_tRNA_Synth"/>
</dbReference>
<dbReference type="InterPro" id="IPR014729">
    <property type="entry name" value="Rossmann-like_a/b/a_fold"/>
</dbReference>
<dbReference type="InterPro" id="IPR009080">
    <property type="entry name" value="tRNAsynth_Ia_anticodon-bd"/>
</dbReference>
<dbReference type="InterPro" id="IPR009008">
    <property type="entry name" value="Val/Leu/Ile-tRNA-synth_edit"/>
</dbReference>
<dbReference type="NCBIfam" id="TIGR00396">
    <property type="entry name" value="leuS_bact"/>
    <property type="match status" value="1"/>
</dbReference>
<dbReference type="PANTHER" id="PTHR43740:SF2">
    <property type="entry name" value="LEUCINE--TRNA LIGASE, MITOCHONDRIAL"/>
    <property type="match status" value="1"/>
</dbReference>
<dbReference type="PANTHER" id="PTHR43740">
    <property type="entry name" value="LEUCYL-TRNA SYNTHETASE"/>
    <property type="match status" value="1"/>
</dbReference>
<dbReference type="Pfam" id="PF08264">
    <property type="entry name" value="Anticodon_1"/>
    <property type="match status" value="1"/>
</dbReference>
<dbReference type="Pfam" id="PF00133">
    <property type="entry name" value="tRNA-synt_1"/>
    <property type="match status" value="1"/>
</dbReference>
<dbReference type="Pfam" id="PF13603">
    <property type="entry name" value="tRNA-synt_1_2"/>
    <property type="match status" value="1"/>
</dbReference>
<dbReference type="Pfam" id="PF09334">
    <property type="entry name" value="tRNA-synt_1g"/>
    <property type="match status" value="1"/>
</dbReference>
<dbReference type="PRINTS" id="PR00985">
    <property type="entry name" value="TRNASYNTHLEU"/>
</dbReference>
<dbReference type="SUPFAM" id="SSF47323">
    <property type="entry name" value="Anticodon-binding domain of a subclass of class I aminoacyl-tRNA synthetases"/>
    <property type="match status" value="1"/>
</dbReference>
<dbReference type="SUPFAM" id="SSF52374">
    <property type="entry name" value="Nucleotidylyl transferase"/>
    <property type="match status" value="1"/>
</dbReference>
<dbReference type="SUPFAM" id="SSF50677">
    <property type="entry name" value="ValRS/IleRS/LeuRS editing domain"/>
    <property type="match status" value="1"/>
</dbReference>
<dbReference type="PROSITE" id="PS00178">
    <property type="entry name" value="AA_TRNA_LIGASE_I"/>
    <property type="match status" value="1"/>
</dbReference>
<comment type="catalytic activity">
    <reaction evidence="1">
        <text>tRNA(Leu) + L-leucine + ATP = L-leucyl-tRNA(Leu) + AMP + diphosphate</text>
        <dbReference type="Rhea" id="RHEA:11688"/>
        <dbReference type="Rhea" id="RHEA-COMP:9613"/>
        <dbReference type="Rhea" id="RHEA-COMP:9622"/>
        <dbReference type="ChEBI" id="CHEBI:30616"/>
        <dbReference type="ChEBI" id="CHEBI:33019"/>
        <dbReference type="ChEBI" id="CHEBI:57427"/>
        <dbReference type="ChEBI" id="CHEBI:78442"/>
        <dbReference type="ChEBI" id="CHEBI:78494"/>
        <dbReference type="ChEBI" id="CHEBI:456215"/>
        <dbReference type="EC" id="6.1.1.4"/>
    </reaction>
</comment>
<comment type="subcellular location">
    <subcellularLocation>
        <location evidence="1">Cytoplasm</location>
    </subcellularLocation>
</comment>
<comment type="similarity">
    <text evidence="1">Belongs to the class-I aminoacyl-tRNA synthetase family.</text>
</comment>
<organism>
    <name type="scientific">Coxiella burnetii (strain CbuG_Q212)</name>
    <name type="common">Coxiella burnetii (strain Q212)</name>
    <dbReference type="NCBI Taxonomy" id="434923"/>
    <lineage>
        <taxon>Bacteria</taxon>
        <taxon>Pseudomonadati</taxon>
        <taxon>Pseudomonadota</taxon>
        <taxon>Gammaproteobacteria</taxon>
        <taxon>Legionellales</taxon>
        <taxon>Coxiellaceae</taxon>
        <taxon>Coxiella</taxon>
    </lineage>
</organism>